<sequence length="494" mass="54612">MANYFNTLNLREQLDQLGRCRFMAREEFATEADYLKGKKVVIVGCGAQGLNQGLNMRDSGLDVSYALRQAAIDEQRQSFKNAKNNGFNVGSYEQLIPTADLVINLTPDKQHTSVVNAVMPLMKQGAALGYSHGFNIVEEGMQIRKDITVVMVAPKCPGTEVREEYKRGFGVPTLIAVHPENDPQGEGWEIAKAWAAATGGHRAGCLASSFVAEVKSDLMGEQTILCGMLQAGSIVCYEKMVADGIDPGYAGKLLQFGWETITEALKFGGITHMMDRLSNPAKIKAFELSEELKDLMRPLYNKHMDDIISGHFSSTMMADWANDDKDLFGWRAETAETAFENYPTTDVKIAEQEYFDNGILMIAMVRAGVELAFEAMTASGIIDESAYYESLHELPLIANTVARKRLYEMNVVISDTAEYGNYLFANVAVPLLREKFMPKVGTDVIGKGLGVVSNQVDNATLIEVNSIIRNHPVEYIGEELRGYMKDMKRIAVGD</sequence>
<accession>C3LQ01</accession>
<evidence type="ECO:0000255" key="1">
    <source>
        <dbReference type="HAMAP-Rule" id="MF_00435"/>
    </source>
</evidence>
<evidence type="ECO:0000255" key="2">
    <source>
        <dbReference type="PROSITE-ProRule" id="PRU01197"/>
    </source>
</evidence>
<evidence type="ECO:0000255" key="3">
    <source>
        <dbReference type="PROSITE-ProRule" id="PRU01198"/>
    </source>
</evidence>
<organism>
    <name type="scientific">Vibrio cholerae serotype O1 (strain M66-2)</name>
    <dbReference type="NCBI Taxonomy" id="579112"/>
    <lineage>
        <taxon>Bacteria</taxon>
        <taxon>Pseudomonadati</taxon>
        <taxon>Pseudomonadota</taxon>
        <taxon>Gammaproteobacteria</taxon>
        <taxon>Vibrionales</taxon>
        <taxon>Vibrionaceae</taxon>
        <taxon>Vibrio</taxon>
    </lineage>
</organism>
<proteinExistence type="inferred from homology"/>
<gene>
    <name evidence="1" type="primary">ilvC</name>
    <name type="ordered locus">VCM66_0161</name>
</gene>
<keyword id="KW-0028">Amino-acid biosynthesis</keyword>
<keyword id="KW-0100">Branched-chain amino acid biosynthesis</keyword>
<keyword id="KW-0460">Magnesium</keyword>
<keyword id="KW-0479">Metal-binding</keyword>
<keyword id="KW-0521">NADP</keyword>
<keyword id="KW-0560">Oxidoreductase</keyword>
<keyword id="KW-0677">Repeat</keyword>
<comment type="function">
    <text evidence="1">Involved in the biosynthesis of branched-chain amino acids (BCAA). Catalyzes an alkyl-migration followed by a ketol-acid reduction of (S)-2-acetolactate (S2AL) to yield (R)-2,3-dihydroxy-isovalerate. In the isomerase reaction, S2AL is rearranged via a Mg-dependent methyl migration to produce 3-hydroxy-3-methyl-2-ketobutyrate (HMKB). In the reductase reaction, this 2-ketoacid undergoes a metal-dependent reduction by NADPH to yield (R)-2,3-dihydroxy-isovalerate.</text>
</comment>
<comment type="catalytic activity">
    <reaction evidence="1">
        <text>(2R)-2,3-dihydroxy-3-methylbutanoate + NADP(+) = (2S)-2-acetolactate + NADPH + H(+)</text>
        <dbReference type="Rhea" id="RHEA:22068"/>
        <dbReference type="ChEBI" id="CHEBI:15378"/>
        <dbReference type="ChEBI" id="CHEBI:49072"/>
        <dbReference type="ChEBI" id="CHEBI:57783"/>
        <dbReference type="ChEBI" id="CHEBI:58349"/>
        <dbReference type="ChEBI" id="CHEBI:58476"/>
        <dbReference type="EC" id="1.1.1.86"/>
    </reaction>
</comment>
<comment type="catalytic activity">
    <reaction evidence="1">
        <text>(2R,3R)-2,3-dihydroxy-3-methylpentanoate + NADP(+) = (S)-2-ethyl-2-hydroxy-3-oxobutanoate + NADPH + H(+)</text>
        <dbReference type="Rhea" id="RHEA:13493"/>
        <dbReference type="ChEBI" id="CHEBI:15378"/>
        <dbReference type="ChEBI" id="CHEBI:49256"/>
        <dbReference type="ChEBI" id="CHEBI:49258"/>
        <dbReference type="ChEBI" id="CHEBI:57783"/>
        <dbReference type="ChEBI" id="CHEBI:58349"/>
        <dbReference type="EC" id="1.1.1.86"/>
    </reaction>
</comment>
<comment type="cofactor">
    <cofactor evidence="1">
        <name>Mg(2+)</name>
        <dbReference type="ChEBI" id="CHEBI:18420"/>
    </cofactor>
    <text evidence="1">Binds 2 magnesium ions per subunit.</text>
</comment>
<comment type="pathway">
    <text evidence="1">Amino-acid biosynthesis; L-isoleucine biosynthesis; L-isoleucine from 2-oxobutanoate: step 2/4.</text>
</comment>
<comment type="pathway">
    <text evidence="1">Amino-acid biosynthesis; L-valine biosynthesis; L-valine from pyruvate: step 2/4.</text>
</comment>
<comment type="similarity">
    <text evidence="1">Belongs to the ketol-acid reductoisomerase family.</text>
</comment>
<dbReference type="EC" id="1.1.1.86" evidence="1"/>
<dbReference type="EMBL" id="CP001233">
    <property type="protein sequence ID" value="ACP04495.1"/>
    <property type="molecule type" value="Genomic_DNA"/>
</dbReference>
<dbReference type="RefSeq" id="WP_000024919.1">
    <property type="nucleotide sequence ID" value="NC_012578.1"/>
</dbReference>
<dbReference type="SMR" id="C3LQ01"/>
<dbReference type="KEGG" id="vcm:VCM66_0161"/>
<dbReference type="HOGENOM" id="CLU_551905_0_0_6"/>
<dbReference type="UniPathway" id="UPA00047">
    <property type="reaction ID" value="UER00056"/>
</dbReference>
<dbReference type="UniPathway" id="UPA00049">
    <property type="reaction ID" value="UER00060"/>
</dbReference>
<dbReference type="Proteomes" id="UP000001217">
    <property type="component" value="Chromosome I"/>
</dbReference>
<dbReference type="GO" id="GO:0005829">
    <property type="term" value="C:cytosol"/>
    <property type="evidence" value="ECO:0007669"/>
    <property type="project" value="TreeGrafter"/>
</dbReference>
<dbReference type="GO" id="GO:0004455">
    <property type="term" value="F:ketol-acid reductoisomerase activity"/>
    <property type="evidence" value="ECO:0007669"/>
    <property type="project" value="UniProtKB-UniRule"/>
</dbReference>
<dbReference type="GO" id="GO:0000287">
    <property type="term" value="F:magnesium ion binding"/>
    <property type="evidence" value="ECO:0007669"/>
    <property type="project" value="UniProtKB-UniRule"/>
</dbReference>
<dbReference type="GO" id="GO:0009097">
    <property type="term" value="P:isoleucine biosynthetic process"/>
    <property type="evidence" value="ECO:0007669"/>
    <property type="project" value="UniProtKB-UniRule"/>
</dbReference>
<dbReference type="GO" id="GO:0009099">
    <property type="term" value="P:L-valine biosynthetic process"/>
    <property type="evidence" value="ECO:0007669"/>
    <property type="project" value="UniProtKB-UniRule"/>
</dbReference>
<dbReference type="FunFam" id="1.10.1040.10:FF:000007">
    <property type="entry name" value="Ketol-acid reductoisomerase (NADP(+))"/>
    <property type="match status" value="1"/>
</dbReference>
<dbReference type="FunFam" id="3.40.50.720:FF:000043">
    <property type="entry name" value="Ketol-acid reductoisomerase (NADP(+))"/>
    <property type="match status" value="1"/>
</dbReference>
<dbReference type="Gene3D" id="1.10.1040.10">
    <property type="entry name" value="N-(1-d-carboxylethyl)-l-norvaline Dehydrogenase, domain 2"/>
    <property type="match status" value="1"/>
</dbReference>
<dbReference type="Gene3D" id="3.40.50.720">
    <property type="entry name" value="NAD(P)-binding Rossmann-like Domain"/>
    <property type="match status" value="1"/>
</dbReference>
<dbReference type="HAMAP" id="MF_00435">
    <property type="entry name" value="IlvC"/>
    <property type="match status" value="1"/>
</dbReference>
<dbReference type="InterPro" id="IPR008927">
    <property type="entry name" value="6-PGluconate_DH-like_C_sf"/>
</dbReference>
<dbReference type="InterPro" id="IPR013328">
    <property type="entry name" value="6PGD_dom2"/>
</dbReference>
<dbReference type="InterPro" id="IPR013023">
    <property type="entry name" value="KARI"/>
</dbReference>
<dbReference type="InterPro" id="IPR000506">
    <property type="entry name" value="KARI_C"/>
</dbReference>
<dbReference type="InterPro" id="IPR013116">
    <property type="entry name" value="KARI_N"/>
</dbReference>
<dbReference type="InterPro" id="IPR036291">
    <property type="entry name" value="NAD(P)-bd_dom_sf"/>
</dbReference>
<dbReference type="NCBIfam" id="TIGR00465">
    <property type="entry name" value="ilvC"/>
    <property type="match status" value="1"/>
</dbReference>
<dbReference type="NCBIfam" id="NF003557">
    <property type="entry name" value="PRK05225.1"/>
    <property type="match status" value="1"/>
</dbReference>
<dbReference type="PANTHER" id="PTHR21371">
    <property type="entry name" value="KETOL-ACID REDUCTOISOMERASE, MITOCHONDRIAL"/>
    <property type="match status" value="1"/>
</dbReference>
<dbReference type="PANTHER" id="PTHR21371:SF1">
    <property type="entry name" value="KETOL-ACID REDUCTOISOMERASE, MITOCHONDRIAL"/>
    <property type="match status" value="1"/>
</dbReference>
<dbReference type="Pfam" id="PF01450">
    <property type="entry name" value="KARI_C"/>
    <property type="match status" value="2"/>
</dbReference>
<dbReference type="Pfam" id="PF07991">
    <property type="entry name" value="KARI_N"/>
    <property type="match status" value="1"/>
</dbReference>
<dbReference type="SUPFAM" id="SSF48179">
    <property type="entry name" value="6-phosphogluconate dehydrogenase C-terminal domain-like"/>
    <property type="match status" value="2"/>
</dbReference>
<dbReference type="SUPFAM" id="SSF51735">
    <property type="entry name" value="NAD(P)-binding Rossmann-fold domains"/>
    <property type="match status" value="1"/>
</dbReference>
<dbReference type="PROSITE" id="PS51851">
    <property type="entry name" value="KARI_C"/>
    <property type="match status" value="2"/>
</dbReference>
<dbReference type="PROSITE" id="PS51850">
    <property type="entry name" value="KARI_N"/>
    <property type="match status" value="1"/>
</dbReference>
<feature type="chain" id="PRO_1000191014" description="Ketol-acid reductoisomerase (NADP(+))">
    <location>
        <begin position="1"/>
        <end position="494"/>
    </location>
</feature>
<feature type="domain" description="KARI N-terminal Rossmann" evidence="2">
    <location>
        <begin position="14"/>
        <end position="208"/>
    </location>
</feature>
<feature type="domain" description="KARI C-terminal knotted 1" evidence="3">
    <location>
        <begin position="209"/>
        <end position="344"/>
    </location>
</feature>
<feature type="domain" description="KARI C-terminal knotted 2" evidence="3">
    <location>
        <begin position="345"/>
        <end position="487"/>
    </location>
</feature>
<feature type="active site" evidence="1">
    <location>
        <position position="132"/>
    </location>
</feature>
<feature type="binding site" evidence="1">
    <location>
        <begin position="45"/>
        <end position="48"/>
    </location>
    <ligand>
        <name>NADP(+)</name>
        <dbReference type="ChEBI" id="CHEBI:58349"/>
    </ligand>
</feature>
<feature type="binding site" evidence="1">
    <location>
        <position position="68"/>
    </location>
    <ligand>
        <name>NADP(+)</name>
        <dbReference type="ChEBI" id="CHEBI:58349"/>
    </ligand>
</feature>
<feature type="binding site" evidence="1">
    <location>
        <position position="76"/>
    </location>
    <ligand>
        <name>NADP(+)</name>
        <dbReference type="ChEBI" id="CHEBI:58349"/>
    </ligand>
</feature>
<feature type="binding site" evidence="1">
    <location>
        <position position="78"/>
    </location>
    <ligand>
        <name>NADP(+)</name>
        <dbReference type="ChEBI" id="CHEBI:58349"/>
    </ligand>
</feature>
<feature type="binding site" evidence="1">
    <location>
        <begin position="108"/>
        <end position="110"/>
    </location>
    <ligand>
        <name>NADP(+)</name>
        <dbReference type="ChEBI" id="CHEBI:58349"/>
    </ligand>
</feature>
<feature type="binding site" evidence="1">
    <location>
        <position position="158"/>
    </location>
    <ligand>
        <name>NADP(+)</name>
        <dbReference type="ChEBI" id="CHEBI:58349"/>
    </ligand>
</feature>
<feature type="binding site" evidence="1">
    <location>
        <position position="217"/>
    </location>
    <ligand>
        <name>Mg(2+)</name>
        <dbReference type="ChEBI" id="CHEBI:18420"/>
        <label>1</label>
    </ligand>
</feature>
<feature type="binding site" evidence="1">
    <location>
        <position position="217"/>
    </location>
    <ligand>
        <name>Mg(2+)</name>
        <dbReference type="ChEBI" id="CHEBI:18420"/>
        <label>2</label>
    </ligand>
</feature>
<feature type="binding site" evidence="1">
    <location>
        <position position="221"/>
    </location>
    <ligand>
        <name>Mg(2+)</name>
        <dbReference type="ChEBI" id="CHEBI:18420"/>
        <label>1</label>
    </ligand>
</feature>
<feature type="binding site" evidence="1">
    <location>
        <position position="389"/>
    </location>
    <ligand>
        <name>Mg(2+)</name>
        <dbReference type="ChEBI" id="CHEBI:18420"/>
        <label>2</label>
    </ligand>
</feature>
<feature type="binding site" evidence="1">
    <location>
        <position position="393"/>
    </location>
    <ligand>
        <name>Mg(2+)</name>
        <dbReference type="ChEBI" id="CHEBI:18420"/>
        <label>2</label>
    </ligand>
</feature>
<feature type="binding site" evidence="1">
    <location>
        <position position="414"/>
    </location>
    <ligand>
        <name>substrate</name>
    </ligand>
</feature>
<reference key="1">
    <citation type="journal article" date="2008" name="PLoS ONE">
        <title>A recalibrated molecular clock and independent origins for the cholera pandemic clones.</title>
        <authorList>
            <person name="Feng L."/>
            <person name="Reeves P.R."/>
            <person name="Lan R."/>
            <person name="Ren Y."/>
            <person name="Gao C."/>
            <person name="Zhou Z."/>
            <person name="Ren Y."/>
            <person name="Cheng J."/>
            <person name="Wang W."/>
            <person name="Wang J."/>
            <person name="Qian W."/>
            <person name="Li D."/>
            <person name="Wang L."/>
        </authorList>
    </citation>
    <scope>NUCLEOTIDE SEQUENCE [LARGE SCALE GENOMIC DNA]</scope>
    <source>
        <strain>M66-2</strain>
    </source>
</reference>
<name>ILVC_VIBCM</name>
<protein>
    <recommendedName>
        <fullName evidence="1">Ketol-acid reductoisomerase (NADP(+))</fullName>
        <shortName evidence="1">KARI</shortName>
        <ecNumber evidence="1">1.1.1.86</ecNumber>
    </recommendedName>
    <alternativeName>
        <fullName evidence="1">Acetohydroxy-acid isomeroreductase</fullName>
        <shortName evidence="1">AHIR</shortName>
    </alternativeName>
    <alternativeName>
        <fullName evidence="1">Alpha-keto-beta-hydroxylacyl reductoisomerase</fullName>
    </alternativeName>
    <alternativeName>
        <fullName evidence="1">Ketol-acid reductoisomerase type 2</fullName>
    </alternativeName>
    <alternativeName>
        <fullName evidence="1">Ketol-acid reductoisomerase type II</fullName>
    </alternativeName>
</protein>